<reference key="1">
    <citation type="journal article" date="2009" name="ISME J.">
        <title>The genome sequence of the psychrophilic archaeon, Methanococcoides burtonii: the role of genome evolution in cold adaptation.</title>
        <authorList>
            <person name="Allen M.A."/>
            <person name="Lauro F.M."/>
            <person name="Williams T.J."/>
            <person name="Burg D."/>
            <person name="Siddiqui K.S."/>
            <person name="De Francisci D."/>
            <person name="Chong K.W."/>
            <person name="Pilak O."/>
            <person name="Chew H.H."/>
            <person name="De Maere M.Z."/>
            <person name="Ting L."/>
            <person name="Katrib M."/>
            <person name="Ng C."/>
            <person name="Sowers K.R."/>
            <person name="Galperin M.Y."/>
            <person name="Anderson I.J."/>
            <person name="Ivanova N."/>
            <person name="Dalin E."/>
            <person name="Martinez M."/>
            <person name="Lapidus A."/>
            <person name="Hauser L."/>
            <person name="Land M."/>
            <person name="Thomas T."/>
            <person name="Cavicchioli R."/>
        </authorList>
    </citation>
    <scope>NUCLEOTIDE SEQUENCE [LARGE SCALE GENOMIC DNA]</scope>
    <source>
        <strain>DSM 6242 / NBRC 107633 / OCM 468 / ACE-M</strain>
    </source>
</reference>
<name>PDXT_METBU</name>
<accession>Q12YR6</accession>
<comment type="function">
    <text evidence="1">Catalyzes the hydrolysis of glutamine to glutamate and ammonia as part of the biosynthesis of pyridoxal 5'-phosphate. The resulting ammonia molecule is channeled to the active site of PdxS.</text>
</comment>
<comment type="catalytic activity">
    <reaction evidence="1">
        <text>aldehydo-D-ribose 5-phosphate + D-glyceraldehyde 3-phosphate + L-glutamine = pyridoxal 5'-phosphate + L-glutamate + phosphate + 3 H2O + H(+)</text>
        <dbReference type="Rhea" id="RHEA:31507"/>
        <dbReference type="ChEBI" id="CHEBI:15377"/>
        <dbReference type="ChEBI" id="CHEBI:15378"/>
        <dbReference type="ChEBI" id="CHEBI:29985"/>
        <dbReference type="ChEBI" id="CHEBI:43474"/>
        <dbReference type="ChEBI" id="CHEBI:58273"/>
        <dbReference type="ChEBI" id="CHEBI:58359"/>
        <dbReference type="ChEBI" id="CHEBI:59776"/>
        <dbReference type="ChEBI" id="CHEBI:597326"/>
        <dbReference type="EC" id="4.3.3.6"/>
    </reaction>
</comment>
<comment type="catalytic activity">
    <reaction evidence="1">
        <text>L-glutamine + H2O = L-glutamate + NH4(+)</text>
        <dbReference type="Rhea" id="RHEA:15889"/>
        <dbReference type="ChEBI" id="CHEBI:15377"/>
        <dbReference type="ChEBI" id="CHEBI:28938"/>
        <dbReference type="ChEBI" id="CHEBI:29985"/>
        <dbReference type="ChEBI" id="CHEBI:58359"/>
        <dbReference type="EC" id="3.5.1.2"/>
    </reaction>
</comment>
<comment type="pathway">
    <text evidence="1">Cofactor biosynthesis; pyridoxal 5'-phosphate biosynthesis.</text>
</comment>
<comment type="subunit">
    <text evidence="1">In the presence of PdxS, forms a dodecamer of heterodimers. Only shows activity in the heterodimer.</text>
</comment>
<comment type="similarity">
    <text evidence="1">Belongs to the glutaminase PdxT/SNO family.</text>
</comment>
<keyword id="KW-0315">Glutamine amidotransferase</keyword>
<keyword id="KW-0378">Hydrolase</keyword>
<keyword id="KW-0456">Lyase</keyword>
<keyword id="KW-0663">Pyridoxal phosphate</keyword>
<proteinExistence type="inferred from homology"/>
<feature type="chain" id="PRO_0000255821" description="Pyridoxal 5'-phosphate synthase subunit PdxT">
    <location>
        <begin position="1"/>
        <end position="198"/>
    </location>
</feature>
<feature type="active site" description="Nucleophile" evidence="1">
    <location>
        <position position="84"/>
    </location>
</feature>
<feature type="active site" description="Charge relay system" evidence="1">
    <location>
        <position position="179"/>
    </location>
</feature>
<feature type="active site" description="Charge relay system" evidence="1">
    <location>
        <position position="181"/>
    </location>
</feature>
<feature type="binding site" evidence="1">
    <location>
        <begin position="52"/>
        <end position="54"/>
    </location>
    <ligand>
        <name>L-glutamine</name>
        <dbReference type="ChEBI" id="CHEBI:58359"/>
    </ligand>
</feature>
<feature type="binding site" evidence="1">
    <location>
        <position position="115"/>
    </location>
    <ligand>
        <name>L-glutamine</name>
        <dbReference type="ChEBI" id="CHEBI:58359"/>
    </ligand>
</feature>
<feature type="binding site" evidence="1">
    <location>
        <begin position="143"/>
        <end position="144"/>
    </location>
    <ligand>
        <name>L-glutamine</name>
        <dbReference type="ChEBI" id="CHEBI:58359"/>
    </ligand>
</feature>
<dbReference type="EC" id="4.3.3.6" evidence="1"/>
<dbReference type="EC" id="3.5.1.2" evidence="1"/>
<dbReference type="EMBL" id="CP000300">
    <property type="protein sequence ID" value="ABE51410.1"/>
    <property type="molecule type" value="Genomic_DNA"/>
</dbReference>
<dbReference type="RefSeq" id="WP_011498572.1">
    <property type="nucleotide sequence ID" value="NC_007955.1"/>
</dbReference>
<dbReference type="SMR" id="Q12YR6"/>
<dbReference type="STRING" id="259564.Mbur_0422"/>
<dbReference type="MEROPS" id="C26.A32"/>
<dbReference type="GeneID" id="3996815"/>
<dbReference type="KEGG" id="mbu:Mbur_0422"/>
<dbReference type="HOGENOM" id="CLU_069674_2_0_2"/>
<dbReference type="OrthoDB" id="26717at2157"/>
<dbReference type="UniPathway" id="UPA00245"/>
<dbReference type="Proteomes" id="UP000001979">
    <property type="component" value="Chromosome"/>
</dbReference>
<dbReference type="GO" id="GO:0005829">
    <property type="term" value="C:cytosol"/>
    <property type="evidence" value="ECO:0007669"/>
    <property type="project" value="TreeGrafter"/>
</dbReference>
<dbReference type="GO" id="GO:1903600">
    <property type="term" value="C:glutaminase complex"/>
    <property type="evidence" value="ECO:0007669"/>
    <property type="project" value="TreeGrafter"/>
</dbReference>
<dbReference type="GO" id="GO:0004359">
    <property type="term" value="F:glutaminase activity"/>
    <property type="evidence" value="ECO:0007669"/>
    <property type="project" value="UniProtKB-UniRule"/>
</dbReference>
<dbReference type="GO" id="GO:0036381">
    <property type="term" value="F:pyridoxal 5'-phosphate synthase (glutamine hydrolysing) activity"/>
    <property type="evidence" value="ECO:0007669"/>
    <property type="project" value="UniProtKB-UniRule"/>
</dbReference>
<dbReference type="GO" id="GO:0006543">
    <property type="term" value="P:glutamine catabolic process"/>
    <property type="evidence" value="ECO:0007669"/>
    <property type="project" value="UniProtKB-UniRule"/>
</dbReference>
<dbReference type="GO" id="GO:0042823">
    <property type="term" value="P:pyridoxal phosphate biosynthetic process"/>
    <property type="evidence" value="ECO:0007669"/>
    <property type="project" value="UniProtKB-UniRule"/>
</dbReference>
<dbReference type="GO" id="GO:0008614">
    <property type="term" value="P:pyridoxine metabolic process"/>
    <property type="evidence" value="ECO:0007669"/>
    <property type="project" value="TreeGrafter"/>
</dbReference>
<dbReference type="CDD" id="cd01749">
    <property type="entry name" value="GATase1_PB"/>
    <property type="match status" value="1"/>
</dbReference>
<dbReference type="FunFam" id="3.40.50.880:FF:000041">
    <property type="entry name" value="Glutamine amidotransferase subunit pdxT, putative"/>
    <property type="match status" value="1"/>
</dbReference>
<dbReference type="Gene3D" id="3.40.50.880">
    <property type="match status" value="1"/>
</dbReference>
<dbReference type="HAMAP" id="MF_01615">
    <property type="entry name" value="PdxT"/>
    <property type="match status" value="1"/>
</dbReference>
<dbReference type="InterPro" id="IPR029062">
    <property type="entry name" value="Class_I_gatase-like"/>
</dbReference>
<dbReference type="InterPro" id="IPR002161">
    <property type="entry name" value="PdxT/SNO"/>
</dbReference>
<dbReference type="InterPro" id="IPR021196">
    <property type="entry name" value="PdxT/SNO_CS"/>
</dbReference>
<dbReference type="NCBIfam" id="TIGR03800">
    <property type="entry name" value="PLP_synth_Pdx2"/>
    <property type="match status" value="1"/>
</dbReference>
<dbReference type="PANTHER" id="PTHR31559">
    <property type="entry name" value="PYRIDOXAL 5'-PHOSPHATE SYNTHASE SUBUNIT SNO"/>
    <property type="match status" value="1"/>
</dbReference>
<dbReference type="PANTHER" id="PTHR31559:SF0">
    <property type="entry name" value="PYRIDOXAL 5'-PHOSPHATE SYNTHASE SUBUNIT SNO1-RELATED"/>
    <property type="match status" value="1"/>
</dbReference>
<dbReference type="Pfam" id="PF01174">
    <property type="entry name" value="SNO"/>
    <property type="match status" value="1"/>
</dbReference>
<dbReference type="PIRSF" id="PIRSF005639">
    <property type="entry name" value="Glut_amidoT_SNO"/>
    <property type="match status" value="1"/>
</dbReference>
<dbReference type="SUPFAM" id="SSF52317">
    <property type="entry name" value="Class I glutamine amidotransferase-like"/>
    <property type="match status" value="1"/>
</dbReference>
<dbReference type="PROSITE" id="PS01236">
    <property type="entry name" value="PDXT_SNO_1"/>
    <property type="match status" value="1"/>
</dbReference>
<dbReference type="PROSITE" id="PS51130">
    <property type="entry name" value="PDXT_SNO_2"/>
    <property type="match status" value="1"/>
</dbReference>
<sequence length="198" mass="21470">MRIGVIAIQGDVSEHVESLERALAERGATAEIVNIKHKGIVPTCDGLVFPGGESTTLGRLILREGIDAEIKDAKEQGIPIMGTCAGLILTAKAGDSQVEKTHQHLLGLMDIKVNRNAFGRQFQSFEVGLEISFLDSPYNAVFIRAPAITEAGEGVKVLASIDGKIVAAEQDNVLAFAFHPELTDDMRVHQYFLDKLFN</sequence>
<protein>
    <recommendedName>
        <fullName evidence="1">Pyridoxal 5'-phosphate synthase subunit PdxT</fullName>
        <ecNumber evidence="1">4.3.3.6</ecNumber>
    </recommendedName>
    <alternativeName>
        <fullName evidence="1">Pdx2</fullName>
    </alternativeName>
    <alternativeName>
        <fullName evidence="1">Pyridoxal 5'-phosphate synthase glutaminase subunit</fullName>
        <ecNumber evidence="1">3.5.1.2</ecNumber>
    </alternativeName>
</protein>
<organism>
    <name type="scientific">Methanococcoides burtonii (strain DSM 6242 / NBRC 107633 / OCM 468 / ACE-M)</name>
    <dbReference type="NCBI Taxonomy" id="259564"/>
    <lineage>
        <taxon>Archaea</taxon>
        <taxon>Methanobacteriati</taxon>
        <taxon>Methanobacteriota</taxon>
        <taxon>Stenosarchaea group</taxon>
        <taxon>Methanomicrobia</taxon>
        <taxon>Methanosarcinales</taxon>
        <taxon>Methanosarcinaceae</taxon>
        <taxon>Methanococcoides</taxon>
    </lineage>
</organism>
<evidence type="ECO:0000255" key="1">
    <source>
        <dbReference type="HAMAP-Rule" id="MF_01615"/>
    </source>
</evidence>
<gene>
    <name evidence="1" type="primary">pdxT</name>
    <name type="ordered locus">Mbur_0422</name>
</gene>